<accession>B7GH25</accession>
<reference key="1">
    <citation type="journal article" date="2008" name="Genome Biol.">
        <title>Encapsulated in silica: genome, proteome and physiology of the thermophilic bacterium Anoxybacillus flavithermus WK1.</title>
        <authorList>
            <person name="Saw J.H."/>
            <person name="Mountain B.W."/>
            <person name="Feng L."/>
            <person name="Omelchenko M.V."/>
            <person name="Hou S."/>
            <person name="Saito J.A."/>
            <person name="Stott M.B."/>
            <person name="Li D."/>
            <person name="Zhao G."/>
            <person name="Wu J."/>
            <person name="Galperin M.Y."/>
            <person name="Koonin E.V."/>
            <person name="Makarova K.S."/>
            <person name="Wolf Y.I."/>
            <person name="Rigden D.J."/>
            <person name="Dunfield P.F."/>
            <person name="Wang L."/>
            <person name="Alam M."/>
        </authorList>
    </citation>
    <scope>NUCLEOTIDE SEQUENCE [LARGE SCALE GENOMIC DNA]</scope>
    <source>
        <strain>DSM 21510 / WK1</strain>
    </source>
</reference>
<comment type="function">
    <text evidence="1">ATP-dependent specificity component of the Clp protease. It directs the protease to specific substrates. Can perform chaperone functions in the absence of ClpP.</text>
</comment>
<comment type="subunit">
    <text evidence="1">Component of the ClpX-ClpP complex. Forms a hexameric ring that, in the presence of ATP, binds to fourteen ClpP subunits assembled into a disk-like structure with a central cavity, resembling the structure of eukaryotic proteasomes.</text>
</comment>
<comment type="similarity">
    <text evidence="1">Belongs to the ClpX chaperone family.</text>
</comment>
<evidence type="ECO:0000255" key="1">
    <source>
        <dbReference type="HAMAP-Rule" id="MF_00175"/>
    </source>
</evidence>
<evidence type="ECO:0000255" key="2">
    <source>
        <dbReference type="PROSITE-ProRule" id="PRU01250"/>
    </source>
</evidence>
<keyword id="KW-0067">ATP-binding</keyword>
<keyword id="KW-0143">Chaperone</keyword>
<keyword id="KW-0479">Metal-binding</keyword>
<keyword id="KW-0547">Nucleotide-binding</keyword>
<keyword id="KW-0862">Zinc</keyword>
<organism>
    <name type="scientific">Anoxybacillus flavithermus (strain DSM 21510 / WK1)</name>
    <dbReference type="NCBI Taxonomy" id="491915"/>
    <lineage>
        <taxon>Bacteria</taxon>
        <taxon>Bacillati</taxon>
        <taxon>Bacillota</taxon>
        <taxon>Bacilli</taxon>
        <taxon>Bacillales</taxon>
        <taxon>Anoxybacillaceae</taxon>
        <taxon>Anoxybacillus</taxon>
    </lineage>
</organism>
<feature type="chain" id="PRO_1000189678" description="ATP-dependent Clp protease ATP-binding subunit ClpX">
    <location>
        <begin position="1"/>
        <end position="420"/>
    </location>
</feature>
<feature type="domain" description="ClpX-type ZB" evidence="2">
    <location>
        <begin position="1"/>
        <end position="54"/>
    </location>
</feature>
<feature type="binding site" evidence="2">
    <location>
        <position position="13"/>
    </location>
    <ligand>
        <name>Zn(2+)</name>
        <dbReference type="ChEBI" id="CHEBI:29105"/>
    </ligand>
</feature>
<feature type="binding site" evidence="2">
    <location>
        <position position="16"/>
    </location>
    <ligand>
        <name>Zn(2+)</name>
        <dbReference type="ChEBI" id="CHEBI:29105"/>
    </ligand>
</feature>
<feature type="binding site" evidence="2">
    <location>
        <position position="35"/>
    </location>
    <ligand>
        <name>Zn(2+)</name>
        <dbReference type="ChEBI" id="CHEBI:29105"/>
    </ligand>
</feature>
<feature type="binding site" evidence="2">
    <location>
        <position position="38"/>
    </location>
    <ligand>
        <name>Zn(2+)</name>
        <dbReference type="ChEBI" id="CHEBI:29105"/>
    </ligand>
</feature>
<feature type="binding site" evidence="1">
    <location>
        <begin position="117"/>
        <end position="124"/>
    </location>
    <ligand>
        <name>ATP</name>
        <dbReference type="ChEBI" id="CHEBI:30616"/>
    </ligand>
</feature>
<gene>
    <name evidence="1" type="primary">clpX</name>
    <name type="ordered locus">Aflv_0600</name>
</gene>
<dbReference type="EMBL" id="CP000922">
    <property type="protein sequence ID" value="ACJ32981.1"/>
    <property type="molecule type" value="Genomic_DNA"/>
</dbReference>
<dbReference type="RefSeq" id="WP_006320366.1">
    <property type="nucleotide sequence ID" value="NC_011567.1"/>
</dbReference>
<dbReference type="SMR" id="B7GH25"/>
<dbReference type="STRING" id="491915.Aflv_0600"/>
<dbReference type="GeneID" id="7036857"/>
<dbReference type="KEGG" id="afl:Aflv_0600"/>
<dbReference type="eggNOG" id="COG1219">
    <property type="taxonomic scope" value="Bacteria"/>
</dbReference>
<dbReference type="HOGENOM" id="CLU_014218_8_2_9"/>
<dbReference type="Proteomes" id="UP000000742">
    <property type="component" value="Chromosome"/>
</dbReference>
<dbReference type="GO" id="GO:0009376">
    <property type="term" value="C:HslUV protease complex"/>
    <property type="evidence" value="ECO:0007669"/>
    <property type="project" value="TreeGrafter"/>
</dbReference>
<dbReference type="GO" id="GO:0005524">
    <property type="term" value="F:ATP binding"/>
    <property type="evidence" value="ECO:0007669"/>
    <property type="project" value="UniProtKB-UniRule"/>
</dbReference>
<dbReference type="GO" id="GO:0016887">
    <property type="term" value="F:ATP hydrolysis activity"/>
    <property type="evidence" value="ECO:0007669"/>
    <property type="project" value="InterPro"/>
</dbReference>
<dbReference type="GO" id="GO:0140662">
    <property type="term" value="F:ATP-dependent protein folding chaperone"/>
    <property type="evidence" value="ECO:0007669"/>
    <property type="project" value="InterPro"/>
</dbReference>
<dbReference type="GO" id="GO:0046983">
    <property type="term" value="F:protein dimerization activity"/>
    <property type="evidence" value="ECO:0007669"/>
    <property type="project" value="InterPro"/>
</dbReference>
<dbReference type="GO" id="GO:0051082">
    <property type="term" value="F:unfolded protein binding"/>
    <property type="evidence" value="ECO:0007669"/>
    <property type="project" value="UniProtKB-UniRule"/>
</dbReference>
<dbReference type="GO" id="GO:0008270">
    <property type="term" value="F:zinc ion binding"/>
    <property type="evidence" value="ECO:0007669"/>
    <property type="project" value="InterPro"/>
</dbReference>
<dbReference type="GO" id="GO:0051301">
    <property type="term" value="P:cell division"/>
    <property type="evidence" value="ECO:0007669"/>
    <property type="project" value="TreeGrafter"/>
</dbReference>
<dbReference type="GO" id="GO:0051603">
    <property type="term" value="P:proteolysis involved in protein catabolic process"/>
    <property type="evidence" value="ECO:0007669"/>
    <property type="project" value="TreeGrafter"/>
</dbReference>
<dbReference type="CDD" id="cd19497">
    <property type="entry name" value="RecA-like_ClpX"/>
    <property type="match status" value="1"/>
</dbReference>
<dbReference type="FunFam" id="1.10.8.60:FF:000002">
    <property type="entry name" value="ATP-dependent Clp protease ATP-binding subunit ClpX"/>
    <property type="match status" value="1"/>
</dbReference>
<dbReference type="FunFam" id="3.40.50.300:FF:000005">
    <property type="entry name" value="ATP-dependent Clp protease ATP-binding subunit ClpX"/>
    <property type="match status" value="1"/>
</dbReference>
<dbReference type="Gene3D" id="1.10.8.60">
    <property type="match status" value="1"/>
</dbReference>
<dbReference type="Gene3D" id="6.20.220.10">
    <property type="entry name" value="ClpX chaperone, C4-type zinc finger domain"/>
    <property type="match status" value="1"/>
</dbReference>
<dbReference type="Gene3D" id="3.40.50.300">
    <property type="entry name" value="P-loop containing nucleotide triphosphate hydrolases"/>
    <property type="match status" value="1"/>
</dbReference>
<dbReference type="HAMAP" id="MF_00175">
    <property type="entry name" value="ClpX"/>
    <property type="match status" value="1"/>
</dbReference>
<dbReference type="InterPro" id="IPR003593">
    <property type="entry name" value="AAA+_ATPase"/>
</dbReference>
<dbReference type="InterPro" id="IPR050052">
    <property type="entry name" value="ATP-dep_Clp_protease_ClpX"/>
</dbReference>
<dbReference type="InterPro" id="IPR003959">
    <property type="entry name" value="ATPase_AAA_core"/>
</dbReference>
<dbReference type="InterPro" id="IPR019489">
    <property type="entry name" value="Clp_ATPase_C"/>
</dbReference>
<dbReference type="InterPro" id="IPR004487">
    <property type="entry name" value="Clp_protease_ATP-bd_su_ClpX"/>
</dbReference>
<dbReference type="InterPro" id="IPR046425">
    <property type="entry name" value="ClpX_bact"/>
</dbReference>
<dbReference type="InterPro" id="IPR027417">
    <property type="entry name" value="P-loop_NTPase"/>
</dbReference>
<dbReference type="InterPro" id="IPR010603">
    <property type="entry name" value="Znf_CppX_C4"/>
</dbReference>
<dbReference type="InterPro" id="IPR038366">
    <property type="entry name" value="Znf_CppX_C4_sf"/>
</dbReference>
<dbReference type="NCBIfam" id="TIGR00382">
    <property type="entry name" value="clpX"/>
    <property type="match status" value="1"/>
</dbReference>
<dbReference type="NCBIfam" id="NF003745">
    <property type="entry name" value="PRK05342.1"/>
    <property type="match status" value="1"/>
</dbReference>
<dbReference type="PANTHER" id="PTHR48102:SF7">
    <property type="entry name" value="ATP-DEPENDENT CLP PROTEASE ATP-BINDING SUBUNIT CLPX-LIKE, MITOCHONDRIAL"/>
    <property type="match status" value="1"/>
</dbReference>
<dbReference type="PANTHER" id="PTHR48102">
    <property type="entry name" value="ATP-DEPENDENT CLP PROTEASE ATP-BINDING SUBUNIT CLPX-LIKE, MITOCHONDRIAL-RELATED"/>
    <property type="match status" value="1"/>
</dbReference>
<dbReference type="Pfam" id="PF07724">
    <property type="entry name" value="AAA_2"/>
    <property type="match status" value="1"/>
</dbReference>
<dbReference type="Pfam" id="PF10431">
    <property type="entry name" value="ClpB_D2-small"/>
    <property type="match status" value="1"/>
</dbReference>
<dbReference type="Pfam" id="PF06689">
    <property type="entry name" value="zf-C4_ClpX"/>
    <property type="match status" value="1"/>
</dbReference>
<dbReference type="SMART" id="SM00382">
    <property type="entry name" value="AAA"/>
    <property type="match status" value="1"/>
</dbReference>
<dbReference type="SMART" id="SM01086">
    <property type="entry name" value="ClpB_D2-small"/>
    <property type="match status" value="1"/>
</dbReference>
<dbReference type="SMART" id="SM00994">
    <property type="entry name" value="zf-C4_ClpX"/>
    <property type="match status" value="1"/>
</dbReference>
<dbReference type="SUPFAM" id="SSF57716">
    <property type="entry name" value="Glucocorticoid receptor-like (DNA-binding domain)"/>
    <property type="match status" value="1"/>
</dbReference>
<dbReference type="SUPFAM" id="SSF52540">
    <property type="entry name" value="P-loop containing nucleoside triphosphate hydrolases"/>
    <property type="match status" value="1"/>
</dbReference>
<dbReference type="PROSITE" id="PS51902">
    <property type="entry name" value="CLPX_ZB"/>
    <property type="match status" value="1"/>
</dbReference>
<protein>
    <recommendedName>
        <fullName evidence="1">ATP-dependent Clp protease ATP-binding subunit ClpX</fullName>
    </recommendedName>
</protein>
<proteinExistence type="inferred from homology"/>
<sequence>MFKFNDEKGQLKCSFCGKTQEQVRKLVAGPGVYICDECIELCTEIVQEELGSEEEVEFKDVPKPKEIRDILDEYVIGQDEAKKALSVAVYNHYKRINSNSKIDDVELAKSNILMIGPTGSGKTLLAQTLARILNVPFAIADATSLTEAGYVGEDVENILLKLIQAADYDIERAEKGIIYIDEIDKIARKSENPSITRDVSGEGVQQALLKILEGTIASVPPQGGRKHPHQEFIQIDTTNILFICGGAFDGLEPIIKRRLGKKVIGFSSDAQAEVEEKDLLSKVLPEDLLKFGLIPEFVGRLPVITSLQPLDEDALVDILVKPKNALVKQYEKMLELDDVELEFEEEALREIAKRAIERKTGARGLRSIIEGIMLDVMFELPSREDVQKCIITAETVRGEKAPLLILHDGTIIEYERKTSA</sequence>
<name>CLPX_ANOFW</name>